<feature type="signal peptide" evidence="2">
    <location>
        <begin position="1"/>
        <end position="22"/>
    </location>
</feature>
<feature type="chain" id="PRO_0000259497" description="Mucin-6">
    <location>
        <begin position="23"/>
        <end position="2850"/>
    </location>
</feature>
<feature type="domain" description="VWFD 1" evidence="4">
    <location>
        <begin position="43"/>
        <end position="256"/>
    </location>
</feature>
<feature type="domain" description="TIL 1">
    <location>
        <begin position="344"/>
        <end position="399"/>
    </location>
</feature>
<feature type="domain" description="VWFD 2" evidence="4">
    <location>
        <begin position="437"/>
        <end position="621"/>
    </location>
</feature>
<feature type="domain" description="TIL 2">
    <location>
        <begin position="806"/>
        <end position="869"/>
    </location>
</feature>
<feature type="domain" description="VWFD 3" evidence="4">
    <location>
        <begin position="908"/>
        <end position="1080"/>
    </location>
</feature>
<feature type="repeat" description="1">
    <location>
        <begin position="1440"/>
        <end position="1555"/>
    </location>
</feature>
<feature type="repeat" description="2">
    <location>
        <begin position="1556"/>
        <end position="1712"/>
    </location>
</feature>
<feature type="repeat" description="3">
    <location>
        <begin position="1713"/>
        <end position="1885"/>
    </location>
</feature>
<feature type="repeat" description="4">
    <location>
        <begin position="1886"/>
        <end position="2054"/>
    </location>
</feature>
<feature type="repeat" description="5">
    <location>
        <begin position="2055"/>
        <end position="2227"/>
    </location>
</feature>
<feature type="repeat" description="6">
    <location>
        <begin position="2228"/>
        <end position="2396"/>
    </location>
</feature>
<feature type="repeat" description="7">
    <location>
        <begin position="2397"/>
        <end position="2563"/>
    </location>
</feature>
<feature type="repeat" description="8">
    <location>
        <begin position="2564"/>
        <end position="2671"/>
    </location>
</feature>
<feature type="domain" description="CTCK" evidence="3">
    <location>
        <begin position="2760"/>
        <end position="2849"/>
    </location>
</feature>
<feature type="region of interest" description="Disordered" evidence="5">
    <location>
        <begin position="160"/>
        <end position="183"/>
    </location>
</feature>
<feature type="region of interest" description="Disordered" evidence="5">
    <location>
        <begin position="1263"/>
        <end position="1363"/>
    </location>
</feature>
<feature type="region of interest" description="Disordered" evidence="5">
    <location>
        <begin position="1377"/>
        <end position="1400"/>
    </location>
</feature>
<feature type="region of interest" description="Approximate repeats" evidence="1">
    <location>
        <begin position="1440"/>
        <end position="2671"/>
    </location>
</feature>
<feature type="region of interest" description="Disordered" evidence="5">
    <location>
        <begin position="1466"/>
        <end position="1504"/>
    </location>
</feature>
<feature type="region of interest" description="Disordered" evidence="5">
    <location>
        <begin position="1580"/>
        <end position="1600"/>
    </location>
</feature>
<feature type="region of interest" description="Disordered" evidence="5">
    <location>
        <begin position="1626"/>
        <end position="1650"/>
    </location>
</feature>
<feature type="region of interest" description="Disordered" evidence="5">
    <location>
        <begin position="1705"/>
        <end position="1813"/>
    </location>
</feature>
<feature type="region of interest" description="Disordered" evidence="5">
    <location>
        <begin position="1877"/>
        <end position="1942"/>
    </location>
</feature>
<feature type="region of interest" description="Disordered" evidence="5">
    <location>
        <begin position="1968"/>
        <end position="1992"/>
    </location>
</feature>
<feature type="region of interest" description="Disordered" evidence="5">
    <location>
        <begin position="2049"/>
        <end position="2119"/>
    </location>
</feature>
<feature type="region of interest" description="Disordered" evidence="5">
    <location>
        <begin position="2219"/>
        <end position="2254"/>
    </location>
</feature>
<feature type="region of interest" description="Disordered" evidence="5">
    <location>
        <begin position="2276"/>
        <end position="2295"/>
    </location>
</feature>
<feature type="region of interest" description="Disordered" evidence="5">
    <location>
        <begin position="2306"/>
        <end position="2338"/>
    </location>
</feature>
<feature type="region of interest" description="Disordered" evidence="5">
    <location>
        <begin position="2370"/>
        <end position="2473"/>
    </location>
</feature>
<feature type="region of interest" description="Disordered" evidence="5">
    <location>
        <begin position="2511"/>
        <end position="2621"/>
    </location>
</feature>
<feature type="region of interest" description="Disordered" evidence="5">
    <location>
        <begin position="2634"/>
        <end position="2674"/>
    </location>
</feature>
<feature type="region of interest" description="Disordered" evidence="5">
    <location>
        <begin position="2692"/>
        <end position="2761"/>
    </location>
</feature>
<feature type="compositionally biased region" description="Low complexity" evidence="5">
    <location>
        <begin position="1263"/>
        <end position="1281"/>
    </location>
</feature>
<feature type="compositionally biased region" description="Polar residues" evidence="5">
    <location>
        <begin position="1294"/>
        <end position="1312"/>
    </location>
</feature>
<feature type="compositionally biased region" description="Low complexity" evidence="5">
    <location>
        <begin position="1345"/>
        <end position="1363"/>
    </location>
</feature>
<feature type="compositionally biased region" description="Polar residues" evidence="5">
    <location>
        <begin position="1378"/>
        <end position="1399"/>
    </location>
</feature>
<feature type="compositionally biased region" description="Polar residues" evidence="5">
    <location>
        <begin position="1466"/>
        <end position="1484"/>
    </location>
</feature>
<feature type="compositionally biased region" description="Low complexity" evidence="5">
    <location>
        <begin position="1485"/>
        <end position="1504"/>
    </location>
</feature>
<feature type="compositionally biased region" description="Polar residues" evidence="5">
    <location>
        <begin position="1626"/>
        <end position="1639"/>
    </location>
</feature>
<feature type="compositionally biased region" description="Low complexity" evidence="5">
    <location>
        <begin position="1705"/>
        <end position="1719"/>
    </location>
</feature>
<feature type="compositionally biased region" description="Polar residues" evidence="5">
    <location>
        <begin position="1720"/>
        <end position="1757"/>
    </location>
</feature>
<feature type="compositionally biased region" description="Low complexity" evidence="5">
    <location>
        <begin position="1758"/>
        <end position="1777"/>
    </location>
</feature>
<feature type="compositionally biased region" description="Polar residues" evidence="5">
    <location>
        <begin position="1778"/>
        <end position="1813"/>
    </location>
</feature>
<feature type="compositionally biased region" description="Low complexity" evidence="5">
    <location>
        <begin position="1893"/>
        <end position="1942"/>
    </location>
</feature>
<feature type="compositionally biased region" description="Polar residues" evidence="5">
    <location>
        <begin position="1968"/>
        <end position="1981"/>
    </location>
</feature>
<feature type="compositionally biased region" description="Low complexity" evidence="5">
    <location>
        <begin position="2049"/>
        <end position="2061"/>
    </location>
</feature>
<feature type="compositionally biased region" description="Polar residues" evidence="5">
    <location>
        <begin position="2062"/>
        <end position="2099"/>
    </location>
</feature>
<feature type="compositionally biased region" description="Low complexity" evidence="5">
    <location>
        <begin position="2100"/>
        <end position="2119"/>
    </location>
</feature>
<feature type="compositionally biased region" description="Polar residues" evidence="5">
    <location>
        <begin position="2227"/>
        <end position="2238"/>
    </location>
</feature>
<feature type="compositionally biased region" description="Low complexity" evidence="5">
    <location>
        <begin position="2282"/>
        <end position="2295"/>
    </location>
</feature>
<feature type="compositionally biased region" description="Low complexity" evidence="5">
    <location>
        <begin position="2370"/>
        <end position="2384"/>
    </location>
</feature>
<feature type="compositionally biased region" description="Polar residues" evidence="5">
    <location>
        <begin position="2385"/>
        <end position="2429"/>
    </location>
</feature>
<feature type="compositionally biased region" description="Low complexity" evidence="5">
    <location>
        <begin position="2436"/>
        <end position="2456"/>
    </location>
</feature>
<feature type="compositionally biased region" description="Polar residues" evidence="5">
    <location>
        <begin position="2457"/>
        <end position="2466"/>
    </location>
</feature>
<feature type="compositionally biased region" description="Low complexity" evidence="5">
    <location>
        <begin position="2516"/>
        <end position="2533"/>
    </location>
</feature>
<feature type="compositionally biased region" description="Polar residues" evidence="5">
    <location>
        <begin position="2534"/>
        <end position="2560"/>
    </location>
</feature>
<feature type="compositionally biased region" description="Low complexity" evidence="5">
    <location>
        <begin position="2561"/>
        <end position="2584"/>
    </location>
</feature>
<feature type="compositionally biased region" description="Polar residues" evidence="5">
    <location>
        <begin position="2585"/>
        <end position="2601"/>
    </location>
</feature>
<feature type="compositionally biased region" description="Low complexity" evidence="5">
    <location>
        <begin position="2639"/>
        <end position="2674"/>
    </location>
</feature>
<feature type="compositionally biased region" description="Polar residues" evidence="5">
    <location>
        <begin position="2692"/>
        <end position="2725"/>
    </location>
</feature>
<feature type="compositionally biased region" description="Low complexity" evidence="5">
    <location>
        <begin position="2726"/>
        <end position="2759"/>
    </location>
</feature>
<feature type="glycosylation site" description="N-linked (GlcNAc...) asparagine" evidence="2">
    <location>
        <position position="94"/>
    </location>
</feature>
<feature type="glycosylation site" description="N-linked (GlcNAc...) asparagine" evidence="2">
    <location>
        <position position="310"/>
    </location>
</feature>
<feature type="glycosylation site" description="N-linked (GlcNAc...) asparagine" evidence="2">
    <location>
        <position position="528"/>
    </location>
</feature>
<feature type="glycosylation site" description="N-linked (GlcNAc...) asparagine" evidence="2">
    <location>
        <position position="701"/>
    </location>
</feature>
<feature type="glycosylation site" description="N-linked (GlcNAc...) asparagine" evidence="2">
    <location>
        <position position="1017"/>
    </location>
</feature>
<feature type="glycosylation site" description="N-linked (GlcNAc...) asparagine" evidence="2">
    <location>
        <position position="1221"/>
    </location>
</feature>
<feature type="disulfide bond" evidence="4">
    <location>
        <begin position="45"/>
        <end position="218"/>
    </location>
</feature>
<feature type="disulfide bond" evidence="4">
    <location>
        <begin position="67"/>
        <end position="255"/>
    </location>
</feature>
<feature type="disulfide bond" evidence="4">
    <location>
        <begin position="439"/>
        <end position="575"/>
    </location>
</feature>
<feature type="disulfide bond" evidence="4">
    <location>
        <begin position="461"/>
        <end position="620"/>
    </location>
</feature>
<feature type="disulfide bond" evidence="4">
    <location>
        <begin position="910"/>
        <end position="1044"/>
    </location>
</feature>
<feature type="disulfide bond" evidence="4">
    <location>
        <begin position="932"/>
        <end position="1079"/>
    </location>
</feature>
<feature type="disulfide bond" evidence="4">
    <location>
        <begin position="941"/>
        <end position="1041"/>
    </location>
</feature>
<feature type="disulfide bond" evidence="4">
    <location>
        <begin position="959"/>
        <end position="966"/>
    </location>
</feature>
<feature type="disulfide bond" evidence="1">
    <location>
        <begin position="2760"/>
        <end position="2807"/>
    </location>
</feature>
<feature type="disulfide bond" evidence="1">
    <location>
        <begin position="2774"/>
        <end position="2821"/>
    </location>
</feature>
<feature type="disulfide bond" evidence="1">
    <location>
        <begin position="2783"/>
        <end position="2841"/>
    </location>
</feature>
<feature type="disulfide bond" evidence="1">
    <location>
        <begin position="2787"/>
        <end position="2843"/>
    </location>
</feature>
<feature type="disulfide bond" evidence="1">
    <location>
        <begin status="unknown"/>
        <end position="2848"/>
    </location>
</feature>
<feature type="sequence conflict" description="In Ref. 2; CAD54411." evidence="8" ref="2">
    <original>DITKTQNLFST</original>
    <variation>ILHRRTSTSTS</variation>
    <location>
        <begin position="1436"/>
        <end position="1446"/>
    </location>
</feature>
<feature type="sequence conflict" description="In Ref. 2; CAD54411." evidence="8" ref="2">
    <location>
        <position position="2793"/>
    </location>
</feature>
<dbReference type="EMBL" id="AY184388">
    <property type="protein sequence ID" value="AAO47735.1"/>
    <property type="molecule type" value="Genomic_DNA"/>
</dbReference>
<dbReference type="EMBL" id="AY184385">
    <property type="protein sequence ID" value="AAO47735.1"/>
    <property type="status" value="JOINED"/>
    <property type="molecule type" value="Genomic_DNA"/>
</dbReference>
<dbReference type="EMBL" id="AY184387">
    <property type="protein sequence ID" value="AAO47735.1"/>
    <property type="status" value="JOINED"/>
    <property type="molecule type" value="Genomic_DNA"/>
</dbReference>
<dbReference type="EMBL" id="AY184386">
    <property type="protein sequence ID" value="AAO47735.1"/>
    <property type="status" value="JOINED"/>
    <property type="molecule type" value="Genomic_DNA"/>
</dbReference>
<dbReference type="EMBL" id="AJ511869">
    <property type="protein sequence ID" value="CAD54411.1"/>
    <property type="molecule type" value="Genomic_DNA"/>
</dbReference>
<dbReference type="SMR" id="Q80T03"/>
<dbReference type="FunCoup" id="Q80T03">
    <property type="interactions" value="65"/>
</dbReference>
<dbReference type="STRING" id="10090.ENSMUSP00000140483"/>
<dbReference type="MEROPS" id="I08.952"/>
<dbReference type="GlyCosmos" id="Q80T03">
    <property type="glycosylation" value="6 sites, No reported glycans"/>
</dbReference>
<dbReference type="GlyGen" id="Q80T03">
    <property type="glycosylation" value="16 sites, 4 N-linked glycans (4 sites)"/>
</dbReference>
<dbReference type="iPTMnet" id="Q80T03"/>
<dbReference type="PhosphoSitePlus" id="Q80T03"/>
<dbReference type="PaxDb" id="10090-ENSMUSP00000140483"/>
<dbReference type="ProteomicsDB" id="287330"/>
<dbReference type="UCSC" id="uc009klu.2">
    <property type="organism name" value="mouse"/>
</dbReference>
<dbReference type="AGR" id="MGI:2663233"/>
<dbReference type="MGI" id="MGI:2663233">
    <property type="gene designation" value="Muc6"/>
</dbReference>
<dbReference type="eggNOG" id="KOG1216">
    <property type="taxonomic scope" value="Eukaryota"/>
</dbReference>
<dbReference type="InParanoid" id="Q80T03"/>
<dbReference type="PhylomeDB" id="Q80T03"/>
<dbReference type="Reactome" id="R-MMU-913709">
    <property type="pathway name" value="O-linked glycosylation of mucins"/>
</dbReference>
<dbReference type="Reactome" id="R-MMU-977068">
    <property type="pathway name" value="Termination of O-glycan biosynthesis"/>
</dbReference>
<dbReference type="PRO" id="PR:Q80T03"/>
<dbReference type="Proteomes" id="UP000000589">
    <property type="component" value="Unplaced"/>
</dbReference>
<dbReference type="RNAct" id="Q80T03">
    <property type="molecule type" value="protein"/>
</dbReference>
<dbReference type="GO" id="GO:0005576">
    <property type="term" value="C:extracellular region"/>
    <property type="evidence" value="ECO:0007669"/>
    <property type="project" value="UniProtKB-SubCell"/>
</dbReference>
<dbReference type="CDD" id="cd19941">
    <property type="entry name" value="TIL"/>
    <property type="match status" value="3"/>
</dbReference>
<dbReference type="FunFam" id="2.10.25.10:FF:000153">
    <property type="entry name" value="MUC5B isoform 1"/>
    <property type="match status" value="2"/>
</dbReference>
<dbReference type="FunFam" id="2.10.25.10:FF:000414">
    <property type="entry name" value="von Willebrand factor"/>
    <property type="match status" value="1"/>
</dbReference>
<dbReference type="Gene3D" id="2.10.25.10">
    <property type="entry name" value="Laminin"/>
    <property type="match status" value="3"/>
</dbReference>
<dbReference type="InterPro" id="IPR006207">
    <property type="entry name" value="Cys_knot_C"/>
</dbReference>
<dbReference type="InterPro" id="IPR050780">
    <property type="entry name" value="Mucin_vWF_Thrombospondin_sf"/>
</dbReference>
<dbReference type="InterPro" id="IPR036084">
    <property type="entry name" value="Ser_inhib-like_sf"/>
</dbReference>
<dbReference type="InterPro" id="IPR002919">
    <property type="entry name" value="TIL_dom"/>
</dbReference>
<dbReference type="InterPro" id="IPR014853">
    <property type="entry name" value="VWF/SSPO/ZAN-like_Cys-rich_dom"/>
</dbReference>
<dbReference type="InterPro" id="IPR001007">
    <property type="entry name" value="VWF_dom"/>
</dbReference>
<dbReference type="InterPro" id="IPR001846">
    <property type="entry name" value="VWF_type-D"/>
</dbReference>
<dbReference type="PANTHER" id="PTHR11339">
    <property type="entry name" value="EXTRACELLULAR MATRIX GLYCOPROTEIN RELATED"/>
    <property type="match status" value="1"/>
</dbReference>
<dbReference type="PANTHER" id="PTHR11339:SF264">
    <property type="entry name" value="MUCIN-6"/>
    <property type="match status" value="1"/>
</dbReference>
<dbReference type="Pfam" id="PF08742">
    <property type="entry name" value="C8"/>
    <property type="match status" value="3"/>
</dbReference>
<dbReference type="Pfam" id="PF01826">
    <property type="entry name" value="TIL"/>
    <property type="match status" value="2"/>
</dbReference>
<dbReference type="Pfam" id="PF00094">
    <property type="entry name" value="VWD"/>
    <property type="match status" value="4"/>
</dbReference>
<dbReference type="SMART" id="SM00832">
    <property type="entry name" value="C8"/>
    <property type="match status" value="3"/>
</dbReference>
<dbReference type="SMART" id="SM00215">
    <property type="entry name" value="VWC_out"/>
    <property type="match status" value="2"/>
</dbReference>
<dbReference type="SMART" id="SM00216">
    <property type="entry name" value="VWD"/>
    <property type="match status" value="3"/>
</dbReference>
<dbReference type="SUPFAM" id="SSF57567">
    <property type="entry name" value="Serine protease inhibitors"/>
    <property type="match status" value="3"/>
</dbReference>
<dbReference type="PROSITE" id="PS01225">
    <property type="entry name" value="CTCK_2"/>
    <property type="match status" value="1"/>
</dbReference>
<dbReference type="PROSITE" id="PS51233">
    <property type="entry name" value="VWFD"/>
    <property type="match status" value="3"/>
</dbReference>
<organism>
    <name type="scientific">Mus musculus</name>
    <name type="common">Mouse</name>
    <dbReference type="NCBI Taxonomy" id="10090"/>
    <lineage>
        <taxon>Eukaryota</taxon>
        <taxon>Metazoa</taxon>
        <taxon>Chordata</taxon>
        <taxon>Craniata</taxon>
        <taxon>Vertebrata</taxon>
        <taxon>Euteleostomi</taxon>
        <taxon>Mammalia</taxon>
        <taxon>Eutheria</taxon>
        <taxon>Euarchontoglires</taxon>
        <taxon>Glires</taxon>
        <taxon>Rodentia</taxon>
        <taxon>Myomorpha</taxon>
        <taxon>Muroidea</taxon>
        <taxon>Muridae</taxon>
        <taxon>Murinae</taxon>
        <taxon>Mus</taxon>
        <taxon>Mus</taxon>
    </lineage>
</organism>
<reference key="1">
    <citation type="journal article" date="2003" name="Genomics">
        <title>Characterization of mouse muc6 and evidence of conservation of the gel-forming mucin gene cluster between human and mouse.</title>
        <authorList>
            <person name="Desseyn J.-L."/>
            <person name="Laine A."/>
        </authorList>
    </citation>
    <scope>NUCLEOTIDE SEQUENCE [GENOMIC DNA]</scope>
    <scope>TISSUE SPECIFICITY</scope>
    <source>
        <strain>C57BL/6J</strain>
    </source>
</reference>
<reference key="2">
    <citation type="journal article" date="2004" name="Biochim. Biophys. Acta">
        <title>The mouse secreted gel-forming mucin gene cluster.</title>
        <authorList>
            <person name="Escande F."/>
            <person name="Porchet N."/>
            <person name="Bernigaud A."/>
            <person name="Petitprez D."/>
            <person name="Aubert J.-P."/>
            <person name="Buisine M.-P."/>
        </authorList>
    </citation>
    <scope>NUCLEOTIDE SEQUENCE [GENOMIC DNA] OF 1436-2850</scope>
    <scope>TISSUE SPECIFICITY</scope>
    <source>
        <strain>C57BL/6J</strain>
    </source>
</reference>
<keyword id="KW-1015">Disulfide bond</keyword>
<keyword id="KW-0325">Glycoprotein</keyword>
<keyword id="KW-1185">Reference proteome</keyword>
<keyword id="KW-0677">Repeat</keyword>
<keyword id="KW-0964">Secreted</keyword>
<keyword id="KW-0732">Signal</keyword>
<name>MUC6_MOUSE</name>
<evidence type="ECO:0000250" key="1"/>
<evidence type="ECO:0000255" key="2"/>
<evidence type="ECO:0000255" key="3">
    <source>
        <dbReference type="PROSITE-ProRule" id="PRU00039"/>
    </source>
</evidence>
<evidence type="ECO:0000255" key="4">
    <source>
        <dbReference type="PROSITE-ProRule" id="PRU00580"/>
    </source>
</evidence>
<evidence type="ECO:0000256" key="5">
    <source>
        <dbReference type="SAM" id="MobiDB-lite"/>
    </source>
</evidence>
<evidence type="ECO:0000269" key="6">
    <source>
    </source>
</evidence>
<evidence type="ECO:0000269" key="7">
    <source>
    </source>
</evidence>
<evidence type="ECO:0000305" key="8"/>
<comment type="function">
    <text>May provide a mechanism for modulation of the composition of the protective mucus layer related to acid secretion or the presence of bacteria and noxious agents in the lumen. Plays an important role in the cytoprotection of epithelial surfaces and are used as tumor markers in a variety of cancers. May play a role in epithelial organogenesis.</text>
</comment>
<comment type="subunit">
    <text evidence="1">Multimer; disulfide-linked.</text>
</comment>
<comment type="subcellular location">
    <subcellularLocation>
        <location>Secreted</location>
    </subcellularLocation>
</comment>
<comment type="tissue specificity">
    <text evidence="6 7">Expressed in stomach, duodenum and small intestine.</text>
</comment>
<comment type="PTM">
    <text evidence="1">O-glycosylated.</text>
</comment>
<accession>Q80T03</accession>
<accession>Q80Z22</accession>
<proteinExistence type="evidence at transcript level"/>
<protein>
    <recommendedName>
        <fullName>Mucin-6</fullName>
        <shortName>MUC-6</shortName>
    </recommendedName>
    <alternativeName>
        <fullName>Gastric mucin-6</fullName>
    </alternativeName>
    <alternativeName>
        <fullName>Secreted gel-forming mucin-6</fullName>
    </alternativeName>
</protein>
<sequence>MLRVRQLLLLLLFRGPLIDAGAWTGDVTDSDTEDNLQSSPEKGWCSTWGAGHFSTFDGHEYNFQGMCNYIFTATCGDDVPATFSIQLRRDMEGNISRIIMELGASVVTVNKETISVRDIGVVSLPYTSNGLQITPYGQSVQLVAKQLELELVITWGPDAHLTEGQGGDEVGTPGTLKQESKGSPAWAGSSLCIPTETNSTTPQVQVETKYMGKLCGLCGNFDGKIDNEFLSEDGKLLEAHKYATLQKLDDPNEICAHEAIPSTIILKTRYAQICNQLLTLVSPGCDVPKETLMLSCQADMAACARPGQPNCSCATLSEYSRRCSMTGQPVRNWRTPALCPMSQCPANQVYQECGEVCIKTCSNPQHSCSSPCTFGCFCPHGTLLDDISGNQSCVPVNQCPCMLNGMVYGPGEITKTACQTCQCTMGRWTCTKQPCPGHCSLEGGSFVTTFDARPYRFHGTCTYTLLQSPQLPNEGTLMAVYDKSGYSHSETSLVAIMYLSKKDKIVISEDEVITNNGDTKLLPYKTHNITIFRQTSTHLQMATTFGLELVFQMQPVFQVYITVGPQFKGQTRGLCGNFNGDTTDDFTTSMGIDEGTASLFVDSWRAGNCPAALEREMDPCSMSQLNKVCAETHCSMLLKKGSVFEKCHSVVNPQPFYKRCVYQACNYEETFPHICSALGAYAHACSARGILLWGWRNSVDNCTVPCTGNRTFSYDSQACDRTCLSLSDRETECHVSPVPVDGCNCPEGTYLNHKAECVHKAQCPCLLDDYKFVQADQSTMINGVICHCINGRLSCPRQAEMFFASCPEPKTFQSCSQSSEDKFGAACAPTCQMLATGIDCVPTKCESGCVCPKGLYENSDGQCVPAEECPCDYAGVSYPGGFELHTDCKTCTCSQGRWTCQLSTQCPSTCVLYGEGHIITFDGQRFVFDGDCEYMLATDDCGANSSQPTFKVLTENVICGKSGVTCSRAIKISLGGLFITMADSNYTVSGEEPLVHLKVKPSPLNLVLDIDIPGRLNLTLVWNKHMSVSIKIRRATQDALCGLCGNANGNMKDDFETRSKYVASNELEFVNSWKESPLCGDASYAVDPCSLNTFRRSWAERKCNIINSQTFAACHSKVYHLPYYEACVRDACGCDTGGDCECLCDAVAAYAKACLDKGVCVDWRTPDFCPIYCDFYNTHTLVGENEYQYAQESNCTWHYQPCLCPGSLGSFPDTNTEGCYNCSQNEYFDHSEGTCVPCAPPTTTLPPTTTGSQPTTETTISTEFHSSTSANTPVAPSYLPGLPTPPPSAPSSTEELTVWTTPKESTVSSGEYPQTTMAATPPTSPWPPTSIPKSTPTELPVTQATSKPTASSLSSSTKTTAELTESTTVTLLTLMPGMSTSQEGTPTSKIPVTQTTTHRVPSRCITNQSTTMFQTTTVQEAEITQTLAPSTYTTNDITKTQNLFSTAPHLSETSAVTAHQSTPTAVSANSIKPTMSSTGTPVVHTTSGTSSSPQTPRTTHPSTTVAVSGTVHTTGLPSGTSVHTTTNFPTHSGPQSSLSTHLPLFSTLSVTPTTEGLNTQSTPIPAITNSLMTTGGLTGTPPVHTTSGTTSSPQTPRTTHPFSTVAVSNTKHTTGVSLETSVQTTIASPTPSAPQTSLATHLPFSSTSSVTPTSEVIITPTPQHTLSSASTSTTTGNILPTTIGKTGSPHTSVPVIYTTSAITQTKTSFSTDRTSTSTSAPHLSETSAVTAHQSTPTAVSANSIKPTMSSTGTPVVHTTSGTTSSPQTPRTTHPSTTVAVSGTVHTTGLPSGTSVHTTTNFPTHSGPQSSLSTHLPLFSTLSVTPTTEGLNTPTSPHSLSVASTSMPLMTVLPTTLEGTRPPHTSVPVTYTTTAATQTKSSFSTDRTSAPHLSQPSTVTPTQSTPIPATTNSLMTTGGLTGTPPVHTTSGTTSSPQTPRTTHPFSTVAVSNTKHTTGVSLETSVQTTIASPTPSAPQTSLATHLPFSSTSSVTPTSEVIITPTPQHTLSSASTSTTTGNILPTTIGQTGSPHTSVPVIYTTSAITQTKTSFSTDRTSTSTSAPHLSETSAVTAHQSTPTAVSANSIKPTMSSTGTPVVHTTSGTTSSPQTPRTTHPSTTVAVSGTVHTTGLPSGTSVHTTTNFPTHSGPQSSLSTHLPLFSTLSVTPTTEGLNTPTSPHSLSAASTSMPLMTVLPTTLEGTRPPHTSVPVTYTTTAATQTKSSFSTDRTSTPHLSQSSTVTPTQPTPIPATTNSPMTTVGLTGTPVVHTPSGTSSIAHTPHTTHSLPTAASSSTTLSTAPQFRTSEQSTTTFPTPSAPQTSLVTSLPPFSTSSVSPTDEIHITSTNPHTVSSVSMSRPVSTILQTTIEVTTPPNTSTPVTHSTSATTEAQGSFSTERTSTSYLSHPSSTTVHQSTAGPVITSIKSTMGVTGTPPVHTTSGTTSSPQTPHSTHPISTAAISRTTGISGTPFRTPMKTTITFPTPSSLQTSMATLFPPFSTSVMSSTEIFNTPTNPHSVSSASTSRPLSTSLPTTIKGTGTPQTPVSDINTTSATTQAHSSFPTTRTSTSHLSLPSSMTSTLTPASRSASTLQYTPTPSSVSHSPLLTTPTASPPSSAPTFVSPTAASTVISSALPTIHMTPTPSSRPTSSTGLLSTSKTTSHVPTFSSFSSKSTTAHLTSLTTQAATSGLLSSTMGMTNLPSSGSPDINHTTRPPGSSPLPTSAFLSRSTSPTGSSSPSTPVSSSNPDSSVSSPPSHPGTCSLQEEEHQITYQGCVANVTLTRCQGFCASSVSFNKDTLQLESSCGCCQPLSTYKKQLSLPCPDPDAPGQQLTLTLQVFSSCVCSPLQCKN</sequence>
<gene>
    <name type="primary">Muc6</name>
</gene>